<organism>
    <name type="scientific">Burkholderia cenocepacia (strain HI2424)</name>
    <dbReference type="NCBI Taxonomy" id="331272"/>
    <lineage>
        <taxon>Bacteria</taxon>
        <taxon>Pseudomonadati</taxon>
        <taxon>Pseudomonadota</taxon>
        <taxon>Betaproteobacteria</taxon>
        <taxon>Burkholderiales</taxon>
        <taxon>Burkholderiaceae</taxon>
        <taxon>Burkholderia</taxon>
        <taxon>Burkholderia cepacia complex</taxon>
    </lineage>
</organism>
<accession>A0K9S5</accession>
<proteinExistence type="inferred from homology"/>
<dbReference type="EMBL" id="CP000458">
    <property type="protein sequence ID" value="ABK09252.1"/>
    <property type="molecule type" value="Genomic_DNA"/>
</dbReference>
<dbReference type="RefSeq" id="WP_004186391.1">
    <property type="nucleotide sequence ID" value="NC_008542.1"/>
</dbReference>
<dbReference type="SMR" id="A0K9S5"/>
<dbReference type="GeneID" id="98107656"/>
<dbReference type="KEGG" id="bch:Bcen2424_2502"/>
<dbReference type="HOGENOM" id="CLU_064548_3_1_4"/>
<dbReference type="GO" id="GO:0022625">
    <property type="term" value="C:cytosolic large ribosomal subunit"/>
    <property type="evidence" value="ECO:0007669"/>
    <property type="project" value="TreeGrafter"/>
</dbReference>
<dbReference type="GO" id="GO:0003735">
    <property type="term" value="F:structural constituent of ribosome"/>
    <property type="evidence" value="ECO:0007669"/>
    <property type="project" value="InterPro"/>
</dbReference>
<dbReference type="GO" id="GO:0006412">
    <property type="term" value="P:translation"/>
    <property type="evidence" value="ECO:0007669"/>
    <property type="project" value="UniProtKB-UniRule"/>
</dbReference>
<dbReference type="FunFam" id="2.30.170.40:FF:000001">
    <property type="entry name" value="50S ribosomal protein L28"/>
    <property type="match status" value="1"/>
</dbReference>
<dbReference type="Gene3D" id="2.30.170.40">
    <property type="entry name" value="Ribosomal protein L28/L24"/>
    <property type="match status" value="1"/>
</dbReference>
<dbReference type="HAMAP" id="MF_00373">
    <property type="entry name" value="Ribosomal_bL28"/>
    <property type="match status" value="1"/>
</dbReference>
<dbReference type="InterPro" id="IPR026569">
    <property type="entry name" value="Ribosomal_bL28"/>
</dbReference>
<dbReference type="InterPro" id="IPR034704">
    <property type="entry name" value="Ribosomal_bL28/bL31-like_sf"/>
</dbReference>
<dbReference type="InterPro" id="IPR001383">
    <property type="entry name" value="Ribosomal_bL28_bact-type"/>
</dbReference>
<dbReference type="InterPro" id="IPR037147">
    <property type="entry name" value="Ribosomal_bL28_sf"/>
</dbReference>
<dbReference type="NCBIfam" id="TIGR00009">
    <property type="entry name" value="L28"/>
    <property type="match status" value="1"/>
</dbReference>
<dbReference type="PANTHER" id="PTHR13528">
    <property type="entry name" value="39S RIBOSOMAL PROTEIN L28, MITOCHONDRIAL"/>
    <property type="match status" value="1"/>
</dbReference>
<dbReference type="PANTHER" id="PTHR13528:SF2">
    <property type="entry name" value="LARGE RIBOSOMAL SUBUNIT PROTEIN BL28M"/>
    <property type="match status" value="1"/>
</dbReference>
<dbReference type="Pfam" id="PF00830">
    <property type="entry name" value="Ribosomal_L28"/>
    <property type="match status" value="1"/>
</dbReference>
<dbReference type="SUPFAM" id="SSF143800">
    <property type="entry name" value="L28p-like"/>
    <property type="match status" value="1"/>
</dbReference>
<keyword id="KW-0687">Ribonucleoprotein</keyword>
<keyword id="KW-0689">Ribosomal protein</keyword>
<sequence>MARVCQVTGKAPMSGNNVSHANNKTKRRFLPNLQNRRFWVESENRWVRLRVSNAGLRLIDKNGIDSVLADLRARGEA</sequence>
<comment type="similarity">
    <text evidence="1">Belongs to the bacterial ribosomal protein bL28 family.</text>
</comment>
<reference key="1">
    <citation type="submission" date="2006-08" db="EMBL/GenBank/DDBJ databases">
        <title>Complete sequence of chromosome 1 of Burkholderia cenocepacia HI2424.</title>
        <authorList>
            <person name="Copeland A."/>
            <person name="Lucas S."/>
            <person name="Lapidus A."/>
            <person name="Barry K."/>
            <person name="Detter J.C."/>
            <person name="Glavina del Rio T."/>
            <person name="Hammon N."/>
            <person name="Israni S."/>
            <person name="Pitluck S."/>
            <person name="Chain P."/>
            <person name="Malfatti S."/>
            <person name="Shin M."/>
            <person name="Vergez L."/>
            <person name="Schmutz J."/>
            <person name="Larimer F."/>
            <person name="Land M."/>
            <person name="Hauser L."/>
            <person name="Kyrpides N."/>
            <person name="Kim E."/>
            <person name="LiPuma J.J."/>
            <person name="Gonzalez C.F."/>
            <person name="Konstantinidis K."/>
            <person name="Tiedje J.M."/>
            <person name="Richardson P."/>
        </authorList>
    </citation>
    <scope>NUCLEOTIDE SEQUENCE [LARGE SCALE GENOMIC DNA]</scope>
    <source>
        <strain>HI2424</strain>
    </source>
</reference>
<evidence type="ECO:0000255" key="1">
    <source>
        <dbReference type="HAMAP-Rule" id="MF_00373"/>
    </source>
</evidence>
<evidence type="ECO:0000256" key="2">
    <source>
        <dbReference type="SAM" id="MobiDB-lite"/>
    </source>
</evidence>
<evidence type="ECO:0000305" key="3"/>
<name>RL28_BURCH</name>
<feature type="chain" id="PRO_1000007187" description="Large ribosomal subunit protein bL28">
    <location>
        <begin position="1"/>
        <end position="77"/>
    </location>
</feature>
<feature type="region of interest" description="Disordered" evidence="2">
    <location>
        <begin position="1"/>
        <end position="25"/>
    </location>
</feature>
<gene>
    <name evidence="1" type="primary">rpmB</name>
    <name type="ordered locus">Bcen2424_2502</name>
</gene>
<protein>
    <recommendedName>
        <fullName evidence="1">Large ribosomal subunit protein bL28</fullName>
    </recommendedName>
    <alternativeName>
        <fullName evidence="3">50S ribosomal protein L28</fullName>
    </alternativeName>
</protein>